<reference key="1">
    <citation type="submission" date="2005-08" db="EMBL/GenBank/DDBJ databases">
        <title>Complete sequence of Chlorobium chlorochromatii CaD3.</title>
        <authorList>
            <consortium name="US DOE Joint Genome Institute"/>
            <person name="Copeland A."/>
            <person name="Lucas S."/>
            <person name="Lapidus A."/>
            <person name="Barry K."/>
            <person name="Detter J.C."/>
            <person name="Glavina T."/>
            <person name="Hammon N."/>
            <person name="Israni S."/>
            <person name="Pitluck S."/>
            <person name="Bryant D."/>
            <person name="Schmutz J."/>
            <person name="Larimer F."/>
            <person name="Land M."/>
            <person name="Kyrpides N."/>
            <person name="Ivanova N."/>
            <person name="Richardson P."/>
        </authorList>
    </citation>
    <scope>NUCLEOTIDE SEQUENCE [LARGE SCALE GENOMIC DNA]</scope>
    <source>
        <strain>CaD3</strain>
    </source>
</reference>
<dbReference type="EC" id="7.1.1.-" evidence="1"/>
<dbReference type="EMBL" id="CP000108">
    <property type="protein sequence ID" value="ABB27907.1"/>
    <property type="molecule type" value="Genomic_DNA"/>
</dbReference>
<dbReference type="SMR" id="Q3ASW8"/>
<dbReference type="STRING" id="340177.Cag_0634"/>
<dbReference type="KEGG" id="cch:Cag_0634"/>
<dbReference type="eggNOG" id="COG0838">
    <property type="taxonomic scope" value="Bacteria"/>
</dbReference>
<dbReference type="HOGENOM" id="CLU_119549_1_0_10"/>
<dbReference type="OrthoDB" id="9791970at2"/>
<dbReference type="GO" id="GO:0030964">
    <property type="term" value="C:NADH dehydrogenase complex"/>
    <property type="evidence" value="ECO:0007669"/>
    <property type="project" value="TreeGrafter"/>
</dbReference>
<dbReference type="GO" id="GO:0005886">
    <property type="term" value="C:plasma membrane"/>
    <property type="evidence" value="ECO:0007669"/>
    <property type="project" value="UniProtKB-SubCell"/>
</dbReference>
<dbReference type="GO" id="GO:0008137">
    <property type="term" value="F:NADH dehydrogenase (ubiquinone) activity"/>
    <property type="evidence" value="ECO:0007669"/>
    <property type="project" value="InterPro"/>
</dbReference>
<dbReference type="GO" id="GO:0050136">
    <property type="term" value="F:NADH:ubiquinone reductase (non-electrogenic) activity"/>
    <property type="evidence" value="ECO:0007669"/>
    <property type="project" value="UniProtKB-UniRule"/>
</dbReference>
<dbReference type="GO" id="GO:0048038">
    <property type="term" value="F:quinone binding"/>
    <property type="evidence" value="ECO:0007669"/>
    <property type="project" value="UniProtKB-KW"/>
</dbReference>
<dbReference type="Gene3D" id="1.20.58.1610">
    <property type="entry name" value="NADH:ubiquinone/plastoquinone oxidoreductase, chain 3"/>
    <property type="match status" value="1"/>
</dbReference>
<dbReference type="HAMAP" id="MF_01394">
    <property type="entry name" value="NDH1_NuoA"/>
    <property type="match status" value="1"/>
</dbReference>
<dbReference type="InterPro" id="IPR023043">
    <property type="entry name" value="NAD(P)H_OxRDtase_bac/plastid"/>
</dbReference>
<dbReference type="InterPro" id="IPR000440">
    <property type="entry name" value="NADH_UbQ/plastoQ_OxRdtase_su3"/>
</dbReference>
<dbReference type="InterPro" id="IPR038430">
    <property type="entry name" value="NDAH_ubi_oxred_su3_sf"/>
</dbReference>
<dbReference type="PANTHER" id="PTHR11058">
    <property type="entry name" value="NADH-UBIQUINONE OXIDOREDUCTASE CHAIN 3"/>
    <property type="match status" value="1"/>
</dbReference>
<dbReference type="PANTHER" id="PTHR11058:SF9">
    <property type="entry name" value="NADH-UBIQUINONE OXIDOREDUCTASE CHAIN 3"/>
    <property type="match status" value="1"/>
</dbReference>
<dbReference type="Pfam" id="PF00507">
    <property type="entry name" value="Oxidored_q4"/>
    <property type="match status" value="1"/>
</dbReference>
<comment type="function">
    <text evidence="1">NDH-1 shuttles electrons from NADH, via FMN and iron-sulfur (Fe-S) centers, to quinones in the respiratory chain. The immediate electron acceptor for the enzyme in this species is believed to be a menaquinone. Couples the redox reaction to proton translocation (for every two electrons transferred, four hydrogen ions are translocated across the cytoplasmic membrane), and thus conserves the redox energy in a proton gradient.</text>
</comment>
<comment type="catalytic activity">
    <reaction evidence="1">
        <text>a quinone + NADH + 5 H(+)(in) = a quinol + NAD(+) + 4 H(+)(out)</text>
        <dbReference type="Rhea" id="RHEA:57888"/>
        <dbReference type="ChEBI" id="CHEBI:15378"/>
        <dbReference type="ChEBI" id="CHEBI:24646"/>
        <dbReference type="ChEBI" id="CHEBI:57540"/>
        <dbReference type="ChEBI" id="CHEBI:57945"/>
        <dbReference type="ChEBI" id="CHEBI:132124"/>
    </reaction>
</comment>
<comment type="subunit">
    <text evidence="1">NDH-1 is composed of 14 different subunits. Subunits NuoA, H, J, K, L, M, N constitute the membrane sector of the complex.</text>
</comment>
<comment type="subcellular location">
    <subcellularLocation>
        <location evidence="1">Cell inner membrane</location>
        <topology evidence="1">Multi-pass membrane protein</topology>
    </subcellularLocation>
</comment>
<comment type="similarity">
    <text evidence="1">Belongs to the complex I subunit 3 family.</text>
</comment>
<keyword id="KW-0997">Cell inner membrane</keyword>
<keyword id="KW-1003">Cell membrane</keyword>
<keyword id="KW-0472">Membrane</keyword>
<keyword id="KW-0520">NAD</keyword>
<keyword id="KW-0874">Quinone</keyword>
<keyword id="KW-1278">Translocase</keyword>
<keyword id="KW-0812">Transmembrane</keyword>
<keyword id="KW-1133">Transmembrane helix</keyword>
<keyword id="KW-0813">Transport</keyword>
<sequence length="146" mass="16313">MDQTLTQFGSVFVFLLLGVIFVVGGYLTSRLLRPSRPNPQKNSTYECGEEAIGSAWVKFNIRFYVVALIFIIFDVEVVFLYPWATVFKPLGTFALIEVLVFAGILILGLAYAWVKGDLDWVRPTPNIPKMPPMPELPVAKGASQKD</sequence>
<organism>
    <name type="scientific">Chlorobium chlorochromatii (strain CaD3)</name>
    <dbReference type="NCBI Taxonomy" id="340177"/>
    <lineage>
        <taxon>Bacteria</taxon>
        <taxon>Pseudomonadati</taxon>
        <taxon>Chlorobiota</taxon>
        <taxon>Chlorobiia</taxon>
        <taxon>Chlorobiales</taxon>
        <taxon>Chlorobiaceae</taxon>
        <taxon>Chlorobium/Pelodictyon group</taxon>
        <taxon>Chlorobium</taxon>
    </lineage>
</organism>
<feature type="chain" id="PRO_0000362655" description="NADH-quinone oxidoreductase subunit A">
    <location>
        <begin position="1"/>
        <end position="146"/>
    </location>
</feature>
<feature type="transmembrane region" description="Helical" evidence="1">
    <location>
        <begin position="8"/>
        <end position="28"/>
    </location>
</feature>
<feature type="transmembrane region" description="Helical" evidence="1">
    <location>
        <begin position="63"/>
        <end position="83"/>
    </location>
</feature>
<feature type="transmembrane region" description="Helical" evidence="1">
    <location>
        <begin position="93"/>
        <end position="113"/>
    </location>
</feature>
<proteinExistence type="inferred from homology"/>
<evidence type="ECO:0000255" key="1">
    <source>
        <dbReference type="HAMAP-Rule" id="MF_01394"/>
    </source>
</evidence>
<accession>Q3ASW8</accession>
<name>NUOA_CHLCH</name>
<protein>
    <recommendedName>
        <fullName evidence="1">NADH-quinone oxidoreductase subunit A</fullName>
        <ecNumber evidence="1">7.1.1.-</ecNumber>
    </recommendedName>
    <alternativeName>
        <fullName evidence="1">NADH dehydrogenase I subunit A</fullName>
    </alternativeName>
    <alternativeName>
        <fullName evidence="1">NDH-1 subunit A</fullName>
    </alternativeName>
    <alternativeName>
        <fullName evidence="1">NUO1</fullName>
    </alternativeName>
</protein>
<gene>
    <name evidence="1" type="primary">nuoA</name>
    <name type="ordered locus">Cag_0634</name>
</gene>